<protein>
    <recommendedName>
        <fullName>Pyrimidine-nucleoside phosphorylase</fullName>
        <shortName>PYNP</shortName>
        <shortName>Py-NPase</shortName>
        <ecNumber>2.4.2.2</ecNumber>
    </recommendedName>
</protein>
<name>PDP_STAAM</name>
<keyword id="KW-0328">Glycosyltransferase</keyword>
<keyword id="KW-0479">Metal-binding</keyword>
<keyword id="KW-0630">Potassium</keyword>
<keyword id="KW-0808">Transferase</keyword>
<evidence type="ECO:0000250" key="1">
    <source>
        <dbReference type="UniProtKB" id="P77836"/>
    </source>
</evidence>
<evidence type="ECO:0000305" key="2"/>
<gene>
    <name type="primary">pdp</name>
    <name type="synonym">pyn</name>
    <name type="ordered locus">SAV2136</name>
</gene>
<feature type="chain" id="PRO_0000269534" description="Pyrimidine-nucleoside phosphorylase">
    <location>
        <begin position="1"/>
        <end position="433"/>
    </location>
</feature>
<feature type="binding site" evidence="1">
    <location>
        <begin position="81"/>
        <end position="83"/>
    </location>
    <ligand>
        <name>phosphate</name>
        <dbReference type="ChEBI" id="CHEBI:43474"/>
    </ligand>
</feature>
<feature type="binding site" evidence="1">
    <location>
        <position position="88"/>
    </location>
    <ligand>
        <name>K(+)</name>
        <dbReference type="ChEBI" id="CHEBI:29103"/>
    </ligand>
</feature>
<feature type="binding site" evidence="1">
    <location>
        <position position="90"/>
    </location>
    <ligand>
        <name>K(+)</name>
        <dbReference type="ChEBI" id="CHEBI:29103"/>
    </ligand>
</feature>
<feature type="binding site" evidence="1">
    <location>
        <position position="92"/>
    </location>
    <ligand>
        <name>phosphate</name>
        <dbReference type="ChEBI" id="CHEBI:43474"/>
    </ligand>
</feature>
<feature type="binding site" evidence="1">
    <location>
        <begin position="108"/>
        <end position="110"/>
    </location>
    <ligand>
        <name>phosphate</name>
        <dbReference type="ChEBI" id="CHEBI:43474"/>
    </ligand>
</feature>
<feature type="binding site" evidence="1">
    <location>
        <position position="120"/>
    </location>
    <ligand>
        <name>phosphate</name>
        <dbReference type="ChEBI" id="CHEBI:43474"/>
    </ligand>
</feature>
<feature type="binding site" evidence="1">
    <location>
        <position position="168"/>
    </location>
    <ligand>
        <name>substrate</name>
    </ligand>
</feature>
<feature type="binding site" evidence="1">
    <location>
        <position position="187"/>
    </location>
    <ligand>
        <name>substrate</name>
    </ligand>
</feature>
<feature type="binding site" evidence="1">
    <location>
        <position position="243"/>
    </location>
    <ligand>
        <name>K(+)</name>
        <dbReference type="ChEBI" id="CHEBI:29103"/>
    </ligand>
</feature>
<feature type="binding site" evidence="1">
    <location>
        <position position="246"/>
    </location>
    <ligand>
        <name>K(+)</name>
        <dbReference type="ChEBI" id="CHEBI:29103"/>
    </ligand>
</feature>
<feature type="binding site" evidence="1">
    <location>
        <position position="255"/>
    </location>
    <ligand>
        <name>K(+)</name>
        <dbReference type="ChEBI" id="CHEBI:29103"/>
    </ligand>
</feature>
<organism>
    <name type="scientific">Staphylococcus aureus (strain Mu50 / ATCC 700699)</name>
    <dbReference type="NCBI Taxonomy" id="158878"/>
    <lineage>
        <taxon>Bacteria</taxon>
        <taxon>Bacillati</taxon>
        <taxon>Bacillota</taxon>
        <taxon>Bacilli</taxon>
        <taxon>Bacillales</taxon>
        <taxon>Staphylococcaceae</taxon>
        <taxon>Staphylococcus</taxon>
    </lineage>
</organism>
<comment type="function">
    <text evidence="1">Catalyzes phosphorolysis of the pyrimidine nucleosides uridine, thymidine and 2'-deoxyuridine with the formation of the corresponding pyrimidine base and ribose-1-phosphate.</text>
</comment>
<comment type="catalytic activity">
    <reaction evidence="1">
        <text>uridine + phosphate = alpha-D-ribose 1-phosphate + uracil</text>
        <dbReference type="Rhea" id="RHEA:24388"/>
        <dbReference type="ChEBI" id="CHEBI:16704"/>
        <dbReference type="ChEBI" id="CHEBI:17568"/>
        <dbReference type="ChEBI" id="CHEBI:43474"/>
        <dbReference type="ChEBI" id="CHEBI:57720"/>
        <dbReference type="EC" id="2.4.2.2"/>
    </reaction>
</comment>
<comment type="catalytic activity">
    <reaction evidence="1">
        <text>thymidine + phosphate = 2-deoxy-alpha-D-ribose 1-phosphate + thymine</text>
        <dbReference type="Rhea" id="RHEA:16037"/>
        <dbReference type="ChEBI" id="CHEBI:17748"/>
        <dbReference type="ChEBI" id="CHEBI:17821"/>
        <dbReference type="ChEBI" id="CHEBI:43474"/>
        <dbReference type="ChEBI" id="CHEBI:57259"/>
        <dbReference type="EC" id="2.4.2.2"/>
    </reaction>
</comment>
<comment type="catalytic activity">
    <reaction evidence="1">
        <text>2'-deoxyuridine + phosphate = 2-deoxy-alpha-D-ribose 1-phosphate + uracil</text>
        <dbReference type="Rhea" id="RHEA:22824"/>
        <dbReference type="ChEBI" id="CHEBI:16450"/>
        <dbReference type="ChEBI" id="CHEBI:17568"/>
        <dbReference type="ChEBI" id="CHEBI:43474"/>
        <dbReference type="ChEBI" id="CHEBI:57259"/>
        <dbReference type="EC" id="2.4.2.2"/>
    </reaction>
</comment>
<comment type="cofactor">
    <cofactor evidence="1">
        <name>K(+)</name>
        <dbReference type="ChEBI" id="CHEBI:29103"/>
    </cofactor>
    <text evidence="1">Binds 1 K(+) ion per subunit.</text>
</comment>
<comment type="subunit">
    <text evidence="1">Homodimer.</text>
</comment>
<comment type="similarity">
    <text evidence="2">Belongs to the thymidine/pyrimidine-nucleoside phosphorylase family.</text>
</comment>
<comment type="sequence caution" evidence="2">
    <conflict type="erroneous initiation">
        <sequence resource="EMBL-CDS" id="BAB58298"/>
    </conflict>
    <text>Extended N-terminus.</text>
</comment>
<dbReference type="EC" id="2.4.2.2"/>
<dbReference type="EMBL" id="BA000017">
    <property type="protein sequence ID" value="BAB58298.1"/>
    <property type="status" value="ALT_INIT"/>
    <property type="molecule type" value="Genomic_DNA"/>
</dbReference>
<dbReference type="RefSeq" id="WP_001242311.1">
    <property type="nucleotide sequence ID" value="NC_002758.2"/>
</dbReference>
<dbReference type="SMR" id="Q99SC3"/>
<dbReference type="KEGG" id="sav:SAV2136"/>
<dbReference type="HOGENOM" id="CLU_025040_0_1_9"/>
<dbReference type="PhylomeDB" id="Q99SC3"/>
<dbReference type="Proteomes" id="UP000002481">
    <property type="component" value="Chromosome"/>
</dbReference>
<dbReference type="GO" id="GO:0005829">
    <property type="term" value="C:cytosol"/>
    <property type="evidence" value="ECO:0007669"/>
    <property type="project" value="TreeGrafter"/>
</dbReference>
<dbReference type="GO" id="GO:0004645">
    <property type="term" value="F:1,4-alpha-oligoglucan phosphorylase activity"/>
    <property type="evidence" value="ECO:0007669"/>
    <property type="project" value="InterPro"/>
</dbReference>
<dbReference type="GO" id="GO:0047847">
    <property type="term" value="F:deoxyuridine phosphorylase activity"/>
    <property type="evidence" value="ECO:0007669"/>
    <property type="project" value="RHEA"/>
</dbReference>
<dbReference type="GO" id="GO:0046872">
    <property type="term" value="F:metal ion binding"/>
    <property type="evidence" value="ECO:0007669"/>
    <property type="project" value="UniProtKB-KW"/>
</dbReference>
<dbReference type="GO" id="GO:0009032">
    <property type="term" value="F:thymidine phosphorylase activity"/>
    <property type="evidence" value="ECO:0007669"/>
    <property type="project" value="TreeGrafter"/>
</dbReference>
<dbReference type="GO" id="GO:0004850">
    <property type="term" value="F:uridine phosphorylase activity"/>
    <property type="evidence" value="ECO:0007669"/>
    <property type="project" value="RHEA"/>
</dbReference>
<dbReference type="GO" id="GO:0006206">
    <property type="term" value="P:pyrimidine nucleobase metabolic process"/>
    <property type="evidence" value="ECO:0007669"/>
    <property type="project" value="InterPro"/>
</dbReference>
<dbReference type="GO" id="GO:0006213">
    <property type="term" value="P:pyrimidine nucleoside metabolic process"/>
    <property type="evidence" value="ECO:0007669"/>
    <property type="project" value="InterPro"/>
</dbReference>
<dbReference type="FunFam" id="1.20.970.10:FF:000002">
    <property type="entry name" value="Pyrimidine-nucleoside phosphorylase"/>
    <property type="match status" value="1"/>
</dbReference>
<dbReference type="FunFam" id="3.40.1030.10:FF:000003">
    <property type="entry name" value="Pyrimidine-nucleoside phosphorylase"/>
    <property type="match status" value="1"/>
</dbReference>
<dbReference type="Gene3D" id="3.40.1030.10">
    <property type="entry name" value="Nucleoside phosphorylase/phosphoribosyltransferase catalytic domain"/>
    <property type="match status" value="1"/>
</dbReference>
<dbReference type="Gene3D" id="3.90.1170.30">
    <property type="entry name" value="Pyrimidine nucleoside phosphorylase-like, C-terminal domain"/>
    <property type="match status" value="1"/>
</dbReference>
<dbReference type="Gene3D" id="1.20.970.10">
    <property type="entry name" value="Transferase, Pyrimidine Nucleoside Phosphorylase, Chain C"/>
    <property type="match status" value="1"/>
</dbReference>
<dbReference type="InterPro" id="IPR000312">
    <property type="entry name" value="Glycosyl_Trfase_fam3"/>
</dbReference>
<dbReference type="InterPro" id="IPR017459">
    <property type="entry name" value="Glycosyl_Trfase_fam3_N_dom"/>
</dbReference>
<dbReference type="InterPro" id="IPR036320">
    <property type="entry name" value="Glycosyl_Trfase_fam3_N_dom_sf"/>
</dbReference>
<dbReference type="InterPro" id="IPR035902">
    <property type="entry name" value="Nuc_phospho_transferase"/>
</dbReference>
<dbReference type="InterPro" id="IPR036566">
    <property type="entry name" value="PYNP-like_C_sf"/>
</dbReference>
<dbReference type="InterPro" id="IPR013102">
    <property type="entry name" value="PYNP_C"/>
</dbReference>
<dbReference type="InterPro" id="IPR018090">
    <property type="entry name" value="Pyrmidine_PPas_bac/euk"/>
</dbReference>
<dbReference type="InterPro" id="IPR017872">
    <property type="entry name" value="Pyrmidine_PPase_CS"/>
</dbReference>
<dbReference type="InterPro" id="IPR000053">
    <property type="entry name" value="Thymidine/pyrmidine_PPase"/>
</dbReference>
<dbReference type="NCBIfam" id="NF004490">
    <property type="entry name" value="PRK05820.1"/>
    <property type="match status" value="1"/>
</dbReference>
<dbReference type="NCBIfam" id="NF004747">
    <property type="entry name" value="PRK06078.1"/>
    <property type="match status" value="1"/>
</dbReference>
<dbReference type="NCBIfam" id="TIGR02644">
    <property type="entry name" value="Y_phosphoryl"/>
    <property type="match status" value="1"/>
</dbReference>
<dbReference type="PANTHER" id="PTHR10515">
    <property type="entry name" value="THYMIDINE PHOSPHORYLASE"/>
    <property type="match status" value="1"/>
</dbReference>
<dbReference type="PANTHER" id="PTHR10515:SF0">
    <property type="entry name" value="THYMIDINE PHOSPHORYLASE"/>
    <property type="match status" value="1"/>
</dbReference>
<dbReference type="Pfam" id="PF02885">
    <property type="entry name" value="Glycos_trans_3N"/>
    <property type="match status" value="1"/>
</dbReference>
<dbReference type="Pfam" id="PF00591">
    <property type="entry name" value="Glycos_transf_3"/>
    <property type="match status" value="1"/>
</dbReference>
<dbReference type="Pfam" id="PF07831">
    <property type="entry name" value="PYNP_C"/>
    <property type="match status" value="1"/>
</dbReference>
<dbReference type="PIRSF" id="PIRSF000478">
    <property type="entry name" value="TP_PyNP"/>
    <property type="match status" value="1"/>
</dbReference>
<dbReference type="SMART" id="SM00941">
    <property type="entry name" value="PYNP_C"/>
    <property type="match status" value="1"/>
</dbReference>
<dbReference type="SUPFAM" id="SSF52418">
    <property type="entry name" value="Nucleoside phosphorylase/phosphoribosyltransferase catalytic domain"/>
    <property type="match status" value="1"/>
</dbReference>
<dbReference type="SUPFAM" id="SSF47648">
    <property type="entry name" value="Nucleoside phosphorylase/phosphoribosyltransferase N-terminal domain"/>
    <property type="match status" value="1"/>
</dbReference>
<dbReference type="SUPFAM" id="SSF54680">
    <property type="entry name" value="Pyrimidine nucleoside phosphorylase C-terminal domain"/>
    <property type="match status" value="1"/>
</dbReference>
<dbReference type="PROSITE" id="PS00647">
    <property type="entry name" value="THYMID_PHOSPHORYLASE"/>
    <property type="match status" value="1"/>
</dbReference>
<accession>Q99SC3</accession>
<proteinExistence type="inferred from homology"/>
<sequence length="433" mass="46366">MRMIDIIEKKRDGHTLTTEEINFFIDGYVKGDIPDYQASSLAMAIYFQDMNDDERAALTMAMVNSGDMIDLSDIKGVKVDKHSTGGVGDTTTLVLAPLVAAVDVPVAKMSGRGLGHTGGTIDKLEAIDGFHVEIDEATFVKLVNENKVAVVGQSGNLTPADKKLYALRDVTGTVNSIPLIASSIMSKKIAAGADAIVLDVKTGSGAFMKTLEDAEALAHAMVRIGNNVGRNTMAIISDMNQPLGRAIGNALELQEAIDTLKGQGPKDLTELVLTLGSQMVVLANKAETLEEARALLIEAINSGAALEKFKTFIKNQGGDETVIDHPERLPQAQYQIEYKAKKSGYVTELVSNDIGVASMMLGAGRLTKEDDIDLAVGIVLNKKIGDKVEEGESLLTIHSNRQDVDDVVKKLDSSITIADHVVSPTLIHKIITE</sequence>
<reference key="1">
    <citation type="journal article" date="2001" name="Lancet">
        <title>Whole genome sequencing of meticillin-resistant Staphylococcus aureus.</title>
        <authorList>
            <person name="Kuroda M."/>
            <person name="Ohta T."/>
            <person name="Uchiyama I."/>
            <person name="Baba T."/>
            <person name="Yuzawa H."/>
            <person name="Kobayashi I."/>
            <person name="Cui L."/>
            <person name="Oguchi A."/>
            <person name="Aoki K."/>
            <person name="Nagai Y."/>
            <person name="Lian J.-Q."/>
            <person name="Ito T."/>
            <person name="Kanamori M."/>
            <person name="Matsumaru H."/>
            <person name="Maruyama A."/>
            <person name="Murakami H."/>
            <person name="Hosoyama A."/>
            <person name="Mizutani-Ui Y."/>
            <person name="Takahashi N.K."/>
            <person name="Sawano T."/>
            <person name="Inoue R."/>
            <person name="Kaito C."/>
            <person name="Sekimizu K."/>
            <person name="Hirakawa H."/>
            <person name="Kuhara S."/>
            <person name="Goto S."/>
            <person name="Yabuzaki J."/>
            <person name="Kanehisa M."/>
            <person name="Yamashita A."/>
            <person name="Oshima K."/>
            <person name="Furuya K."/>
            <person name="Yoshino C."/>
            <person name="Shiba T."/>
            <person name="Hattori M."/>
            <person name="Ogasawara N."/>
            <person name="Hayashi H."/>
            <person name="Hiramatsu K."/>
        </authorList>
    </citation>
    <scope>NUCLEOTIDE SEQUENCE [LARGE SCALE GENOMIC DNA]</scope>
    <source>
        <strain>Mu50 / ATCC 700699</strain>
    </source>
</reference>